<name>PYS1_MICDP</name>
<keyword id="KW-0042">Antenna complex</keyword>
<keyword id="KW-0472">Membrane</keyword>
<keyword id="KW-0602">Photosynthesis</keyword>
<keyword id="KW-0605">Phycobilisome</keyword>
<keyword id="KW-0793">Thylakoid</keyword>
<proteinExistence type="inferred from homology"/>
<feature type="chain" id="PRO_0000199228" description="Phycobilisome 9.7 kDa linker polypeptide, phycocyanin-associated, rod">
    <location>
        <begin position="1"/>
        <end position="85"/>
    </location>
</feature>
<feature type="domain" description="CpcD-like" evidence="1">
    <location>
        <begin position="16"/>
        <end position="74"/>
    </location>
</feature>
<comment type="function">
    <text>Rod linker protein, associated with phycocyanin. Linker polypeptides determine the state of aggregation and the location of the disk-shaped phycobiliprotein units within the phycobilisome and modulate their spectroscopic properties in order to mediate a directed and optimal energy transfer.</text>
</comment>
<comment type="subcellular location">
    <subcellularLocation>
        <location>Cellular thylakoid membrane</location>
        <topology>Peripheral membrane protein</topology>
        <orientation>Cytoplasmic side</orientation>
    </subcellularLocation>
    <text>This protein occurs in the rod, it is associated with phycocyanin.</text>
</comment>
<comment type="similarity">
    <text evidence="2">Belongs to the phycobilisome linker protein family.</text>
</comment>
<sequence length="85" mass="9745">MLGSVLTRRSSSGSDNRVFVYEVEGLRQNEQTDNNRYQIRNSSTIEIQVPYSRMNEEDRRITRLGGRIVNIRPAGENPTEDASEN</sequence>
<gene>
    <name type="primary">cpcD2</name>
</gene>
<organism>
    <name type="scientific">Microchaete diplosiphon</name>
    <name type="common">Fremyella diplosiphon</name>
    <dbReference type="NCBI Taxonomy" id="1197"/>
    <lineage>
        <taxon>Bacteria</taxon>
        <taxon>Bacillati</taxon>
        <taxon>Cyanobacteriota</taxon>
        <taxon>Cyanophyceae</taxon>
        <taxon>Nostocales</taxon>
        <taxon>Rivulariaceae</taxon>
        <taxon>Microchaete</taxon>
    </lineage>
</organism>
<evidence type="ECO:0000255" key="1">
    <source>
        <dbReference type="PROSITE-ProRule" id="PRU00771"/>
    </source>
</evidence>
<evidence type="ECO:0000305" key="2"/>
<protein>
    <recommendedName>
        <fullName>Phycobilisome 9.7 kDa linker polypeptide, phycocyanin-associated, rod</fullName>
        <shortName>L-9.7/R</shortName>
    </recommendedName>
    <alternativeName>
        <fullName>Rod-capping linker protein</fullName>
    </alternativeName>
</protein>
<accession>P11397</accession>
<dbReference type="EMBL" id="M16490">
    <property type="protein sequence ID" value="AAA24888.1"/>
    <property type="molecule type" value="Genomic_DNA"/>
</dbReference>
<dbReference type="SMR" id="P11397"/>
<dbReference type="GO" id="GO:0030089">
    <property type="term" value="C:phycobilisome"/>
    <property type="evidence" value="ECO:0007669"/>
    <property type="project" value="UniProtKB-KW"/>
</dbReference>
<dbReference type="GO" id="GO:0031676">
    <property type="term" value="C:plasma membrane-derived thylakoid membrane"/>
    <property type="evidence" value="ECO:0007669"/>
    <property type="project" value="UniProtKB-SubCell"/>
</dbReference>
<dbReference type="GO" id="GO:0015979">
    <property type="term" value="P:photosynthesis"/>
    <property type="evidence" value="ECO:0007669"/>
    <property type="project" value="UniProtKB-KW"/>
</dbReference>
<dbReference type="InterPro" id="IPR008213">
    <property type="entry name" value="CpcD-like_dom"/>
</dbReference>
<dbReference type="Pfam" id="PF01383">
    <property type="entry name" value="CpcD"/>
    <property type="match status" value="1"/>
</dbReference>
<dbReference type="SMART" id="SM01094">
    <property type="entry name" value="CpcD"/>
    <property type="match status" value="1"/>
</dbReference>
<dbReference type="PROSITE" id="PS51441">
    <property type="entry name" value="CPCD_LIKE"/>
    <property type="match status" value="1"/>
</dbReference>
<reference key="1">
    <citation type="journal article" date="1987" name="J. Bacteriol.">
        <title>Isolation and characterization of light-regulated phycobilisome linker polypeptide genes and their transcription as a polycistronic mRNA.</title>
        <authorList>
            <person name="Lomax T.L."/>
            <person name="Conley P.B."/>
            <person name="Schilling J."/>
            <person name="Grossman A.R."/>
        </authorList>
    </citation>
    <scope>NUCLEOTIDE SEQUENCE [GENOMIC DNA]</scope>
</reference>